<reference key="1">
    <citation type="submission" date="2008-05" db="EMBL/GenBank/DDBJ databases">
        <title>Complete sequence of chromosome 2 of Ralstonia pickettii 12J.</title>
        <authorList>
            <person name="Lucas S."/>
            <person name="Copeland A."/>
            <person name="Lapidus A."/>
            <person name="Glavina del Rio T."/>
            <person name="Dalin E."/>
            <person name="Tice H."/>
            <person name="Bruce D."/>
            <person name="Goodwin L."/>
            <person name="Pitluck S."/>
            <person name="Meincke L."/>
            <person name="Brettin T."/>
            <person name="Detter J.C."/>
            <person name="Han C."/>
            <person name="Kuske C.R."/>
            <person name="Schmutz J."/>
            <person name="Larimer F."/>
            <person name="Land M."/>
            <person name="Hauser L."/>
            <person name="Kyrpides N."/>
            <person name="Mikhailova N."/>
            <person name="Marsh T."/>
            <person name="Richardson P."/>
        </authorList>
    </citation>
    <scope>NUCLEOTIDE SEQUENCE [LARGE SCALE GENOMIC DNA]</scope>
    <source>
        <strain>12J</strain>
    </source>
</reference>
<evidence type="ECO:0000255" key="1">
    <source>
        <dbReference type="HAMAP-Rule" id="MF_00334"/>
    </source>
</evidence>
<protein>
    <recommendedName>
        <fullName evidence="1">Homogentisate 1,2-dioxygenase</fullName>
        <shortName evidence="1">HGDO</shortName>
        <ecNumber evidence="1">1.13.11.5</ecNumber>
    </recommendedName>
    <alternativeName>
        <fullName evidence="1">Homogentisate oxygenase</fullName>
    </alternativeName>
    <alternativeName>
        <fullName evidence="1">Homogentisic acid oxidase</fullName>
    </alternativeName>
    <alternativeName>
        <fullName evidence="1">Homogentisicase</fullName>
    </alternativeName>
</protein>
<sequence length="448" mass="49276">MNMLAPTAKNAFTPASLDRPAYQSGFGNEFSTEALPGALPHGQNSPQKAPYGLYAEQISGTAFTAPRAHNRRSWLYRIRPGAVHLPFEAMAQGRFHSHFNEVPPSPNQLRWDPLPAPAAGTDFIDGIVTFAGNGGPDAQTGCGIHLYAANADMTDRFFYNADGELLIVPQQGRLRLLTEMGVVDVEPLEIAVIPRGVRFRVELPDGDARGYICENFGALFRLPDLGVIGSNGLANPRDFLTPHAWYEDREGAFELVAKFQGSLWTAKIGHSPLDVVAWHGNLAPYKYDLRLFNTIGSISYDHPDPSIFLVLQSPSATPGVDTIDFVIFPPRWLAAENTFRPPWFHRNVASEFMGLIQGVYDAKAEGFVPGGASLHNCMSGHGPDADTFEKASNSDTTKPHKVDATMAFMFETPAVIRPTRFAAESAQLQAKYFECWQGLKKHFDPSKR</sequence>
<accession>B2UJ73</accession>
<organism>
    <name type="scientific">Ralstonia pickettii (strain 12J)</name>
    <dbReference type="NCBI Taxonomy" id="402626"/>
    <lineage>
        <taxon>Bacteria</taxon>
        <taxon>Pseudomonadati</taxon>
        <taxon>Pseudomonadota</taxon>
        <taxon>Betaproteobacteria</taxon>
        <taxon>Burkholderiales</taxon>
        <taxon>Burkholderiaceae</taxon>
        <taxon>Ralstonia</taxon>
    </lineage>
</organism>
<keyword id="KW-0223">Dioxygenase</keyword>
<keyword id="KW-0408">Iron</keyword>
<keyword id="KW-0479">Metal-binding</keyword>
<keyword id="KW-0560">Oxidoreductase</keyword>
<keyword id="KW-0585">Phenylalanine catabolism</keyword>
<keyword id="KW-0828">Tyrosine catabolism</keyword>
<comment type="function">
    <text evidence="1">Involved in the catabolism of homogentisate (2,5-dihydroxyphenylacetate or 2,5-OH-PhAc), a central intermediate in the degradation of phenylalanine and tyrosine. Catalyzes the oxidative ring cleavage of the aromatic ring of homogentisate to yield maleylacetoacetate.</text>
</comment>
<comment type="catalytic activity">
    <reaction evidence="1">
        <text>homogentisate + O2 = 4-maleylacetoacetate + H(+)</text>
        <dbReference type="Rhea" id="RHEA:15449"/>
        <dbReference type="ChEBI" id="CHEBI:15378"/>
        <dbReference type="ChEBI" id="CHEBI:15379"/>
        <dbReference type="ChEBI" id="CHEBI:16169"/>
        <dbReference type="ChEBI" id="CHEBI:17105"/>
        <dbReference type="EC" id="1.13.11.5"/>
    </reaction>
</comment>
<comment type="cofactor">
    <cofactor evidence="1">
        <name>Fe cation</name>
        <dbReference type="ChEBI" id="CHEBI:24875"/>
    </cofactor>
</comment>
<comment type="pathway">
    <text evidence="1">Amino-acid degradation; L-phenylalanine degradation; acetoacetate and fumarate from L-phenylalanine: step 4/6.</text>
</comment>
<comment type="subunit">
    <text evidence="1">Hexamer; dimer of trimers.</text>
</comment>
<comment type="similarity">
    <text evidence="1">Belongs to the homogentisate dioxygenase family.</text>
</comment>
<proteinExistence type="inferred from homology"/>
<name>HGD_RALPJ</name>
<dbReference type="EC" id="1.13.11.5" evidence="1"/>
<dbReference type="EMBL" id="CP001069">
    <property type="protein sequence ID" value="ACD29624.1"/>
    <property type="molecule type" value="Genomic_DNA"/>
</dbReference>
<dbReference type="SMR" id="B2UJ73"/>
<dbReference type="STRING" id="402626.Rpic_4534"/>
<dbReference type="KEGG" id="rpi:Rpic_4534"/>
<dbReference type="eggNOG" id="COG3508">
    <property type="taxonomic scope" value="Bacteria"/>
</dbReference>
<dbReference type="HOGENOM" id="CLU_027174_0_0_4"/>
<dbReference type="UniPathway" id="UPA00139">
    <property type="reaction ID" value="UER00339"/>
</dbReference>
<dbReference type="GO" id="GO:0005737">
    <property type="term" value="C:cytoplasm"/>
    <property type="evidence" value="ECO:0007669"/>
    <property type="project" value="TreeGrafter"/>
</dbReference>
<dbReference type="GO" id="GO:0004411">
    <property type="term" value="F:homogentisate 1,2-dioxygenase activity"/>
    <property type="evidence" value="ECO:0007669"/>
    <property type="project" value="UniProtKB-UniRule"/>
</dbReference>
<dbReference type="GO" id="GO:0005506">
    <property type="term" value="F:iron ion binding"/>
    <property type="evidence" value="ECO:0007669"/>
    <property type="project" value="UniProtKB-UniRule"/>
</dbReference>
<dbReference type="GO" id="GO:0006559">
    <property type="term" value="P:L-phenylalanine catabolic process"/>
    <property type="evidence" value="ECO:0007669"/>
    <property type="project" value="UniProtKB-UniRule"/>
</dbReference>
<dbReference type="GO" id="GO:0006572">
    <property type="term" value="P:tyrosine catabolic process"/>
    <property type="evidence" value="ECO:0007669"/>
    <property type="project" value="UniProtKB-UniRule"/>
</dbReference>
<dbReference type="CDD" id="cd07000">
    <property type="entry name" value="cupin_HGO_N"/>
    <property type="match status" value="1"/>
</dbReference>
<dbReference type="FunFam" id="2.60.120.10:FF:000034">
    <property type="entry name" value="Homogentisate 1,2-dioxygenase"/>
    <property type="match status" value="1"/>
</dbReference>
<dbReference type="Gene3D" id="2.60.120.10">
    <property type="entry name" value="Jelly Rolls"/>
    <property type="match status" value="1"/>
</dbReference>
<dbReference type="HAMAP" id="MF_00334">
    <property type="entry name" value="Homogentis_dioxygen"/>
    <property type="match status" value="1"/>
</dbReference>
<dbReference type="InterPro" id="IPR046451">
    <property type="entry name" value="HgmA_C"/>
</dbReference>
<dbReference type="InterPro" id="IPR046452">
    <property type="entry name" value="HgmA_N"/>
</dbReference>
<dbReference type="InterPro" id="IPR005708">
    <property type="entry name" value="Homogentis_dOase"/>
</dbReference>
<dbReference type="InterPro" id="IPR022950">
    <property type="entry name" value="Homogentis_dOase_bac"/>
</dbReference>
<dbReference type="InterPro" id="IPR014710">
    <property type="entry name" value="RmlC-like_jellyroll"/>
</dbReference>
<dbReference type="InterPro" id="IPR011051">
    <property type="entry name" value="RmlC_Cupin_sf"/>
</dbReference>
<dbReference type="NCBIfam" id="TIGR01015">
    <property type="entry name" value="hmgA"/>
    <property type="match status" value="1"/>
</dbReference>
<dbReference type="PANTHER" id="PTHR11056">
    <property type="entry name" value="HOMOGENTISATE 1,2-DIOXYGENASE"/>
    <property type="match status" value="1"/>
</dbReference>
<dbReference type="PANTHER" id="PTHR11056:SF0">
    <property type="entry name" value="HOMOGENTISATE 1,2-DIOXYGENASE"/>
    <property type="match status" value="1"/>
</dbReference>
<dbReference type="Pfam" id="PF04209">
    <property type="entry name" value="HgmA_C"/>
    <property type="match status" value="1"/>
</dbReference>
<dbReference type="Pfam" id="PF20510">
    <property type="entry name" value="HgmA_N"/>
    <property type="match status" value="1"/>
</dbReference>
<dbReference type="SUPFAM" id="SSF51182">
    <property type="entry name" value="RmlC-like cupins"/>
    <property type="match status" value="1"/>
</dbReference>
<feature type="chain" id="PRO_1000119847" description="Homogentisate 1,2-dioxygenase">
    <location>
        <begin position="1"/>
        <end position="448"/>
    </location>
</feature>
<feature type="active site" description="Proton acceptor" evidence="1">
    <location>
        <position position="302"/>
    </location>
</feature>
<feature type="binding site" evidence="1">
    <location>
        <position position="345"/>
    </location>
    <ligand>
        <name>Fe cation</name>
        <dbReference type="ChEBI" id="CHEBI:24875"/>
    </ligand>
</feature>
<feature type="binding site" evidence="1">
    <location>
        <position position="351"/>
    </location>
    <ligand>
        <name>Fe cation</name>
        <dbReference type="ChEBI" id="CHEBI:24875"/>
    </ligand>
</feature>
<feature type="binding site" evidence="1">
    <location>
        <position position="360"/>
    </location>
    <ligand>
        <name>homogentisate</name>
        <dbReference type="ChEBI" id="CHEBI:16169"/>
    </ligand>
</feature>
<feature type="binding site" evidence="1">
    <location>
        <position position="381"/>
    </location>
    <ligand>
        <name>Fe cation</name>
        <dbReference type="ChEBI" id="CHEBI:24875"/>
    </ligand>
</feature>
<feature type="binding site" evidence="1">
    <location>
        <position position="381"/>
    </location>
    <ligand>
        <name>homogentisate</name>
        <dbReference type="ChEBI" id="CHEBI:16169"/>
    </ligand>
</feature>
<gene>
    <name evidence="1" type="primary">hmgA</name>
    <name type="ordered locus">Rpic_4534</name>
</gene>